<protein>
    <recommendedName>
        <fullName evidence="3">4-nitrobenzoate reductase</fullName>
        <shortName evidence="3">4-NBA reductase</shortName>
        <ecNumber evidence="2">1.7.1.-</ecNumber>
    </recommendedName>
    <alternativeName>
        <fullName evidence="3">4-nitrobenzoate nitroreductase</fullName>
        <shortName evidence="3">4-NBA nitroreductase</shortName>
    </alternativeName>
</protein>
<dbReference type="EC" id="1.7.1.-" evidence="2"/>
<dbReference type="EMBL" id="CP076104">
    <property type="protein sequence ID" value="QWF22307.1"/>
    <property type="molecule type" value="Genomic_DNA"/>
</dbReference>
<dbReference type="GO" id="GO:0016491">
    <property type="term" value="F:oxidoreductase activity"/>
    <property type="evidence" value="ECO:0007669"/>
    <property type="project" value="UniProtKB-KW"/>
</dbReference>
<dbReference type="CDD" id="cd02136">
    <property type="entry name" value="PnbA_NfnB-like"/>
    <property type="match status" value="1"/>
</dbReference>
<dbReference type="Gene3D" id="3.40.109.10">
    <property type="entry name" value="NADH Oxidase"/>
    <property type="match status" value="1"/>
</dbReference>
<dbReference type="InterPro" id="IPR029479">
    <property type="entry name" value="Nitroreductase"/>
</dbReference>
<dbReference type="InterPro" id="IPR000415">
    <property type="entry name" value="Nitroreductase-like"/>
</dbReference>
<dbReference type="PANTHER" id="PTHR43673">
    <property type="entry name" value="NAD(P)H NITROREDUCTASE YDGI-RELATED"/>
    <property type="match status" value="1"/>
</dbReference>
<dbReference type="PANTHER" id="PTHR43673:SF2">
    <property type="entry name" value="NITROREDUCTASE"/>
    <property type="match status" value="1"/>
</dbReference>
<dbReference type="Pfam" id="PF00881">
    <property type="entry name" value="Nitroreductase"/>
    <property type="match status" value="1"/>
</dbReference>
<dbReference type="SUPFAM" id="SSF55469">
    <property type="entry name" value="FMN-dependent nitroreductase-like"/>
    <property type="match status" value="1"/>
</dbReference>
<reference key="1">
    <citation type="journal article" date="2021" name="Environ. Microbiol.">
        <title>The low-nanomolar 4-nitrobenzoate-responsive repressor PnbX negatively regulates the actinomycete-derived 4-nitrobenzoate-degrading pnb locus.</title>
        <authorList>
            <person name="Cheng M."/>
            <person name="Qian Y."/>
            <person name="Xing Z."/>
            <person name="Zylstra G.J."/>
            <person name="Huang X."/>
        </authorList>
    </citation>
    <scope>NUCLEOTIDE SEQUENCE [LARGE SCALE GENOMIC DNA]</scope>
    <scope>FUNCTION</scope>
    <scope>CATALYTIC ACTIVITY</scope>
    <scope>BIOPHYSICOCHEMICAL PROPERTIES</scope>
    <scope>INDUCTION</scope>
    <source>
        <strain>LMS-CY</strain>
    </source>
</reference>
<comment type="function">
    <text evidence="2">Nitroreductase involved in the degradation of nitroaromatic compounds (PubMed:34554625). Catalyzes the conversion of 4-nitrobenzoate to 4-hydroxylaminobenzoate (PubMed:34554625).</text>
</comment>
<comment type="catalytic activity">
    <reaction evidence="2">
        <text>4-nitrobenzoate + 2 NADPH + 2 H(+) = 4-hydroxylaminobenzoate + 2 NADP(+) + H2O</text>
        <dbReference type="Rhea" id="RHEA:80195"/>
        <dbReference type="ChEBI" id="CHEBI:15377"/>
        <dbReference type="ChEBI" id="CHEBI:15378"/>
        <dbReference type="ChEBI" id="CHEBI:57783"/>
        <dbReference type="ChEBI" id="CHEBI:58349"/>
        <dbReference type="ChEBI" id="CHEBI:142863"/>
        <dbReference type="ChEBI" id="CHEBI:231457"/>
    </reaction>
    <physiologicalReaction direction="left-to-right" evidence="2">
        <dbReference type="Rhea" id="RHEA:80196"/>
    </physiologicalReaction>
</comment>
<comment type="cofactor">
    <cofactor evidence="1">
        <name>FMN</name>
        <dbReference type="ChEBI" id="CHEBI:58210"/>
    </cofactor>
    <text evidence="1">Binds 1 FMN per subunit.</text>
</comment>
<comment type="biophysicochemical properties">
    <kinetics>
        <KM evidence="2">19.7 uM for 4-nitrobenzoate</KM>
        <text evidence="2">kcat is 7.40 sec(-1) with 4-nitrobenzoate as substrate.</text>
    </kinetics>
    <phDependence>
        <text evidence="2">Optimum pH is 7.5.</text>
    </phDependence>
    <temperatureDependence>
        <text evidence="2">Optimum temperature is 35 degrees Celsius.</text>
    </temperatureDependence>
</comment>
<comment type="induction">
    <text evidence="2">In the absence of 4-nitrobenzoate, expression is repressed by the transcriptional regulator PnbX (PubMed:34554625). Transcription is induced by 4-nitrobenzoate (PubMed:34554625).</text>
</comment>
<comment type="similarity">
    <text evidence="4">Belongs to the nitroreductase family.</text>
</comment>
<proteinExistence type="evidence at protein level"/>
<sequence>MSSTAPEDVARPLLALPAIEAFDAIVRGRRSVRSYADVQVPRRTVRDVLELAARAPSNSNVQPWHTYVLTGRHKRALTDSVLRYYDTIGRTVREFDYQPGPDGWEEPYKERRESFGEGLYGRALGLSLADVDDREFYHRRNYDFFAAPVGLIVTVARNPRLSALIDAGAYIQTILLSARSRGLSTCAQASFLDFHPAVRECLAIPTHRTIVCGISLGYEDAQHPIASNATTREPVDRHVTFLWDDDD</sequence>
<feature type="chain" id="PRO_0000461678" description="4-nitrobenzoate reductase">
    <location>
        <begin position="1"/>
        <end position="247"/>
    </location>
</feature>
<feature type="binding site" evidence="1">
    <location>
        <begin position="29"/>
        <end position="33"/>
    </location>
    <ligand>
        <name>FMN</name>
        <dbReference type="ChEBI" id="CHEBI:58210"/>
    </ligand>
</feature>
<feature type="binding site" evidence="1">
    <location>
        <position position="59"/>
    </location>
    <ligand>
        <name>NADP(+)</name>
        <dbReference type="ChEBI" id="CHEBI:58349"/>
    </ligand>
</feature>
<feature type="binding site" evidence="1">
    <location>
        <position position="112"/>
    </location>
    <ligand>
        <name>NADP(+)</name>
        <dbReference type="ChEBI" id="CHEBI:58349"/>
    </ligand>
</feature>
<feature type="binding site" evidence="1">
    <location>
        <position position="120"/>
    </location>
    <ligand>
        <name>NADP(+)</name>
        <dbReference type="ChEBI" id="CHEBI:58349"/>
    </ligand>
</feature>
<feature type="binding site" evidence="1">
    <location>
        <position position="126"/>
    </location>
    <ligand>
        <name>NADP(+)</name>
        <dbReference type="ChEBI" id="CHEBI:58349"/>
    </ligand>
</feature>
<feature type="binding site" evidence="1">
    <location>
        <position position="232"/>
    </location>
    <ligand>
        <name>FMN</name>
        <dbReference type="ChEBI" id="CHEBI:58210"/>
    </ligand>
</feature>
<accession>P0DXG6</accession>
<name>PNBA_NOCS0</name>
<organism>
    <name type="scientific">Nocardioides sp. (strain LMS-CY)</name>
    <dbReference type="NCBI Taxonomy" id="2840457"/>
    <lineage>
        <taxon>Bacteria</taxon>
        <taxon>Bacillati</taxon>
        <taxon>Actinomycetota</taxon>
        <taxon>Actinomycetes</taxon>
        <taxon>Propionibacteriales</taxon>
        <taxon>Nocardioidaceae</taxon>
        <taxon>Nocardioides</taxon>
    </lineage>
</organism>
<gene>
    <name evidence="3" type="primary">pnbA</name>
    <name evidence="5" type="ORF">KM427_00695</name>
</gene>
<evidence type="ECO:0000250" key="1">
    <source>
        <dbReference type="UniProtKB" id="A0R6D0"/>
    </source>
</evidence>
<evidence type="ECO:0000269" key="2">
    <source>
    </source>
</evidence>
<evidence type="ECO:0000303" key="3">
    <source>
    </source>
</evidence>
<evidence type="ECO:0000305" key="4"/>
<evidence type="ECO:0000312" key="5">
    <source>
        <dbReference type="EMBL" id="QWF22307.1"/>
    </source>
</evidence>
<keyword id="KW-0285">Flavoprotein</keyword>
<keyword id="KW-0288">FMN</keyword>
<keyword id="KW-0521">NADP</keyword>
<keyword id="KW-0560">Oxidoreductase</keyword>